<dbReference type="EC" id="3.1.-.-" evidence="1"/>
<dbReference type="EMBL" id="AP008934">
    <property type="protein sequence ID" value="BAE18954.1"/>
    <property type="molecule type" value="Genomic_DNA"/>
</dbReference>
<dbReference type="RefSeq" id="WP_011303504.1">
    <property type="nucleotide sequence ID" value="NC_007350.1"/>
</dbReference>
<dbReference type="SMR" id="Q49WA5"/>
<dbReference type="GeneID" id="3616464"/>
<dbReference type="KEGG" id="ssp:SSP1809"/>
<dbReference type="PATRIC" id="fig|342451.11.peg.1805"/>
<dbReference type="eggNOG" id="COG3857">
    <property type="taxonomic scope" value="Bacteria"/>
</dbReference>
<dbReference type="HOGENOM" id="CLU_007838_0_0_9"/>
<dbReference type="OrthoDB" id="9758506at2"/>
<dbReference type="Proteomes" id="UP000006371">
    <property type="component" value="Chromosome"/>
</dbReference>
<dbReference type="GO" id="GO:0051539">
    <property type="term" value="F:4 iron, 4 sulfur cluster binding"/>
    <property type="evidence" value="ECO:0007669"/>
    <property type="project" value="UniProtKB-KW"/>
</dbReference>
<dbReference type="GO" id="GO:0008409">
    <property type="term" value="F:5'-3' exonuclease activity"/>
    <property type="evidence" value="ECO:0007669"/>
    <property type="project" value="UniProtKB-UniRule"/>
</dbReference>
<dbReference type="GO" id="GO:0005524">
    <property type="term" value="F:ATP binding"/>
    <property type="evidence" value="ECO:0007669"/>
    <property type="project" value="UniProtKB-UniRule"/>
</dbReference>
<dbReference type="GO" id="GO:0003690">
    <property type="term" value="F:double-stranded DNA binding"/>
    <property type="evidence" value="ECO:0007669"/>
    <property type="project" value="UniProtKB-UniRule"/>
</dbReference>
<dbReference type="GO" id="GO:0004386">
    <property type="term" value="F:helicase activity"/>
    <property type="evidence" value="ECO:0007669"/>
    <property type="project" value="UniProtKB-KW"/>
</dbReference>
<dbReference type="GO" id="GO:0046872">
    <property type="term" value="F:metal ion binding"/>
    <property type="evidence" value="ECO:0007669"/>
    <property type="project" value="UniProtKB-KW"/>
</dbReference>
<dbReference type="GO" id="GO:0000724">
    <property type="term" value="P:double-strand break repair via homologous recombination"/>
    <property type="evidence" value="ECO:0007669"/>
    <property type="project" value="UniProtKB-UniRule"/>
</dbReference>
<dbReference type="Gene3D" id="3.90.320.10">
    <property type="match status" value="1"/>
</dbReference>
<dbReference type="Gene3D" id="6.10.140.1030">
    <property type="match status" value="1"/>
</dbReference>
<dbReference type="Gene3D" id="3.40.50.300">
    <property type="entry name" value="P-loop containing nucleotide triphosphate hydrolases"/>
    <property type="match status" value="4"/>
</dbReference>
<dbReference type="HAMAP" id="MF_01452">
    <property type="entry name" value="AddB_type1"/>
    <property type="match status" value="1"/>
</dbReference>
<dbReference type="InterPro" id="IPR049035">
    <property type="entry name" value="ADDB_N"/>
</dbReference>
<dbReference type="InterPro" id="IPR014140">
    <property type="entry name" value="DNA_helicase_suAddB"/>
</dbReference>
<dbReference type="InterPro" id="IPR014017">
    <property type="entry name" value="DNA_helicase_UvrD-like_C"/>
</dbReference>
<dbReference type="InterPro" id="IPR027417">
    <property type="entry name" value="P-loop_NTPase"/>
</dbReference>
<dbReference type="InterPro" id="IPR011604">
    <property type="entry name" value="PDDEXK-like_dom_sf"/>
</dbReference>
<dbReference type="InterPro" id="IPR038726">
    <property type="entry name" value="PDDEXK_AddAB-type"/>
</dbReference>
<dbReference type="NCBIfam" id="TIGR02773">
    <property type="entry name" value="addB_Gpos"/>
    <property type="match status" value="1"/>
</dbReference>
<dbReference type="PANTHER" id="PTHR30591">
    <property type="entry name" value="RECBCD ENZYME SUBUNIT RECC"/>
    <property type="match status" value="1"/>
</dbReference>
<dbReference type="PANTHER" id="PTHR30591:SF1">
    <property type="entry name" value="RECBCD ENZYME SUBUNIT RECC"/>
    <property type="match status" value="1"/>
</dbReference>
<dbReference type="Pfam" id="PF21445">
    <property type="entry name" value="ADDB_N"/>
    <property type="match status" value="1"/>
</dbReference>
<dbReference type="Pfam" id="PF12705">
    <property type="entry name" value="PDDEXK_1"/>
    <property type="match status" value="1"/>
</dbReference>
<dbReference type="SUPFAM" id="SSF52540">
    <property type="entry name" value="P-loop containing nucleoside triphosphate hydrolases"/>
    <property type="match status" value="1"/>
</dbReference>
<dbReference type="PROSITE" id="PS51198">
    <property type="entry name" value="UVRD_HELICASE_ATP_BIND"/>
    <property type="match status" value="1"/>
</dbReference>
<dbReference type="PROSITE" id="PS51217">
    <property type="entry name" value="UVRD_HELICASE_CTER"/>
    <property type="match status" value="1"/>
</dbReference>
<gene>
    <name evidence="1" type="primary">addB</name>
    <name type="ordered locus">SSP1809</name>
</gene>
<organism>
    <name type="scientific">Staphylococcus saprophyticus subsp. saprophyticus (strain ATCC 15305 / DSM 20229 / NCIMB 8711 / NCTC 7292 / S-41)</name>
    <dbReference type="NCBI Taxonomy" id="342451"/>
    <lineage>
        <taxon>Bacteria</taxon>
        <taxon>Bacillati</taxon>
        <taxon>Bacillota</taxon>
        <taxon>Bacilli</taxon>
        <taxon>Bacillales</taxon>
        <taxon>Staphylococcaceae</taxon>
        <taxon>Staphylococcus</taxon>
    </lineage>
</organism>
<reference key="1">
    <citation type="journal article" date="2005" name="Proc. Natl. Acad. Sci. U.S.A.">
        <title>Whole genome sequence of Staphylococcus saprophyticus reveals the pathogenesis of uncomplicated urinary tract infection.</title>
        <authorList>
            <person name="Kuroda M."/>
            <person name="Yamashita A."/>
            <person name="Hirakawa H."/>
            <person name="Kumano M."/>
            <person name="Morikawa K."/>
            <person name="Higashide M."/>
            <person name="Maruyama A."/>
            <person name="Inose Y."/>
            <person name="Matoba K."/>
            <person name="Toh H."/>
            <person name="Kuhara S."/>
            <person name="Hattori M."/>
            <person name="Ohta T."/>
        </authorList>
    </citation>
    <scope>NUCLEOTIDE SEQUENCE [LARGE SCALE GENOMIC DNA]</scope>
    <source>
        <strain>ATCC 15305 / DSM 20229 / NCIMB 8711 / NCTC 7292 / S-41</strain>
    </source>
</reference>
<name>ADDB_STAS1</name>
<comment type="function">
    <text evidence="1">The heterodimer acts as both an ATP-dependent DNA helicase and an ATP-dependent, dual-direction single-stranded exonuclease. Recognizes the chi site generating a DNA molecule suitable for the initiation of homologous recombination. The AddB subunit has 5' -&gt; 3' nuclease activity but not helicase activity.</text>
</comment>
<comment type="cofactor">
    <cofactor evidence="1">
        <name>Mg(2+)</name>
        <dbReference type="ChEBI" id="CHEBI:18420"/>
    </cofactor>
</comment>
<comment type="cofactor">
    <cofactor evidence="1">
        <name>[4Fe-4S] cluster</name>
        <dbReference type="ChEBI" id="CHEBI:49883"/>
    </cofactor>
    <text evidence="1">Binds 1 [4Fe-4S] cluster.</text>
</comment>
<comment type="subunit">
    <text evidence="1">Heterodimer of AddA and AddB.</text>
</comment>
<comment type="miscellaneous">
    <text evidence="1">Despite having conserved helicase domains, this subunit does not have helicase activity.</text>
</comment>
<comment type="similarity">
    <text evidence="1">Belongs to the helicase family. AddB/RexB type 1 subfamily.</text>
</comment>
<evidence type="ECO:0000255" key="1">
    <source>
        <dbReference type="HAMAP-Rule" id="MF_01452"/>
    </source>
</evidence>
<proteinExistence type="inferred from homology"/>
<sequence>MELNAYIGRAGTGKSKAIIEEIKEKMKQDPLGDPIVLIAPTQNTFQLEQAFVNDKTLNGSLRTEVLHFERLSYRVFQEVGGLMEQQLSKAGTEMMIYDIIQQHQSELRLYQSQVKYYGFSEKLYEQIQDFKKYAVSPQQLETYIAENNLQTRTKHKLQDIALVYKHLEDRINGEYVSTEDSLQRFIEMMDQSEWLKRAEIYIDGFHNFSTLEYQIIQSLVKYAKKVTIVLTTDGDRDLFSLFRKPSESLTHIEEIANNLNIQLHSRQFLDVQRFIHNDLKHLEQNFNALQFEPIPTEGNVEILEASGMREEINEVARRILRENREQGRRFQDIAILYRDESYAYLMESILPQYDIPYNIDVKSSMTHHPIMEMIRSLIEVIQTGWQFDPLMRLFKTNILTKKFKDSQYLIDILENFVLERGIYGKRWIDDKYFDIEQFRKMGLKRQPLTDEERETFERVIQLKNDVMKKVMLFEEKINNASTAIAFATAFYEAMEAFDLPSQLMTDRDTLDVNGEHKKAEEIDQIWNGLIQILDDLVTVFDDQSMSKTRFLELFDIGLEQLEFIMIPQTLDQVSIGTMDLAKVDNKQHVYLVGANDGVLPQTVTASSLITDEEKKYFQEQSSIELSPTADILQMDEAFVCYIAMTRSRAHVTFSYALMGASGDVKEPSPFLHQIQQLYTNLEVQNIHHQHQAEPLRLMEHPHQTKIALFESLKAWLDDELVAETWLDTYQVMRNDTRLNDGLTYLLSALTYDNQTVQLNPSLSKALYGSTINASVSRFEGYQACPFKHFASHGLRLNERTKYKLENFDLGDIFHRVLKFISEKVNGDFKNLNPKQIHKLTTEALSEILPEVQFNLLNSTAYYRYLSQRIGAIVETTLTALKYQGSHTKFTPQRFEASFRRKPKDQSELLATPLQTKQGIPINIRGQIDRIDTYQQGDESFVNIIDYKSSKYSGTLDLTKVYYGLQMQMMTYMDIVLQNKSRLGLTDMTKPGGLLYFHVHEPRIKLAWNQLSEDKRDTEFINSFKLSGLLNSATSVLDAFDTRLEPSYNSDIVPLGLKKDGGIKSNSKVADEQTIYKLIKHNKQNFIETASNIMDGHTEVAPMKYNQTLPCDFCNYKSVCHVDGMIDSKRYRTVDESINPLEAIQDVDLESEGE</sequence>
<keyword id="KW-0004">4Fe-4S</keyword>
<keyword id="KW-0067">ATP-binding</keyword>
<keyword id="KW-0227">DNA damage</keyword>
<keyword id="KW-0234">DNA repair</keyword>
<keyword id="KW-0238">DNA-binding</keyword>
<keyword id="KW-0269">Exonuclease</keyword>
<keyword id="KW-0347">Helicase</keyword>
<keyword id="KW-0378">Hydrolase</keyword>
<keyword id="KW-0408">Iron</keyword>
<keyword id="KW-0411">Iron-sulfur</keyword>
<keyword id="KW-0479">Metal-binding</keyword>
<keyword id="KW-0540">Nuclease</keyword>
<keyword id="KW-0547">Nucleotide-binding</keyword>
<keyword id="KW-1185">Reference proteome</keyword>
<accession>Q49WA5</accession>
<feature type="chain" id="PRO_0000379222" description="ATP-dependent helicase/deoxyribonuclease subunit B">
    <location>
        <begin position="1"/>
        <end position="1153"/>
    </location>
</feature>
<feature type="domain" description="UvrD-like helicase ATP-binding" evidence="1">
    <location>
        <begin position="1"/>
        <end position="289"/>
    </location>
</feature>
<feature type="domain" description="UvrD-like helicase C-terminal" evidence="1">
    <location>
        <begin position="269"/>
        <end position="583"/>
    </location>
</feature>
<feature type="binding site" evidence="1">
    <location>
        <begin position="8"/>
        <end position="15"/>
    </location>
    <ligand>
        <name>ATP</name>
        <dbReference type="ChEBI" id="CHEBI:30616"/>
    </ligand>
</feature>
<feature type="binding site" evidence="1">
    <location>
        <position position="784"/>
    </location>
    <ligand>
        <name>[4Fe-4S] cluster</name>
        <dbReference type="ChEBI" id="CHEBI:49883"/>
    </ligand>
</feature>
<feature type="binding site" evidence="1">
    <location>
        <position position="1110"/>
    </location>
    <ligand>
        <name>[4Fe-4S] cluster</name>
        <dbReference type="ChEBI" id="CHEBI:49883"/>
    </ligand>
</feature>
<feature type="binding site" evidence="1">
    <location>
        <position position="1113"/>
    </location>
    <ligand>
        <name>[4Fe-4S] cluster</name>
        <dbReference type="ChEBI" id="CHEBI:49883"/>
    </ligand>
</feature>
<feature type="binding site" evidence="1">
    <location>
        <position position="1119"/>
    </location>
    <ligand>
        <name>[4Fe-4S] cluster</name>
        <dbReference type="ChEBI" id="CHEBI:49883"/>
    </ligand>
</feature>
<protein>
    <recommendedName>
        <fullName evidence="1">ATP-dependent helicase/deoxyribonuclease subunit B</fullName>
        <ecNumber evidence="1">3.1.-.-</ecNumber>
    </recommendedName>
    <alternativeName>
        <fullName evidence="1">ATP-dependent helicase/nuclease subunit AddB</fullName>
    </alternativeName>
</protein>